<proteinExistence type="inferred from homology"/>
<name>NU2M_BALPH</name>
<geneLocation type="mitochondrion"/>
<gene>
    <name evidence="1" type="primary">MT-ND2</name>
    <name type="synonym">MTND2</name>
    <name type="synonym">NADH2</name>
    <name type="synonym">ND2</name>
</gene>
<keyword id="KW-0249">Electron transport</keyword>
<keyword id="KW-0472">Membrane</keyword>
<keyword id="KW-0496">Mitochondrion</keyword>
<keyword id="KW-0999">Mitochondrion inner membrane</keyword>
<keyword id="KW-0520">NAD</keyword>
<keyword id="KW-0679">Respiratory chain</keyword>
<keyword id="KW-1278">Translocase</keyword>
<keyword id="KW-0812">Transmembrane</keyword>
<keyword id="KW-1133">Transmembrane helix</keyword>
<keyword id="KW-0813">Transport</keyword>
<keyword id="KW-0830">Ubiquinone</keyword>
<protein>
    <recommendedName>
        <fullName evidence="1">NADH-ubiquinone oxidoreductase chain 2</fullName>
        <ecNumber evidence="1">7.1.1.2</ecNumber>
    </recommendedName>
    <alternativeName>
        <fullName>NADH dehydrogenase subunit 2</fullName>
    </alternativeName>
</protein>
<accession>P24970</accession>
<comment type="function">
    <text evidence="1">Core subunit of the mitochondrial membrane respiratory chain NADH dehydrogenase (Complex I) which catalyzes electron transfer from NADH through the respiratory chain, using ubiquinone as an electron acceptor. Essential for the catalytic activity and assembly of complex I.</text>
</comment>
<comment type="catalytic activity">
    <reaction evidence="1">
        <text>a ubiquinone + NADH + 5 H(+)(in) = a ubiquinol + NAD(+) + 4 H(+)(out)</text>
        <dbReference type="Rhea" id="RHEA:29091"/>
        <dbReference type="Rhea" id="RHEA-COMP:9565"/>
        <dbReference type="Rhea" id="RHEA-COMP:9566"/>
        <dbReference type="ChEBI" id="CHEBI:15378"/>
        <dbReference type="ChEBI" id="CHEBI:16389"/>
        <dbReference type="ChEBI" id="CHEBI:17976"/>
        <dbReference type="ChEBI" id="CHEBI:57540"/>
        <dbReference type="ChEBI" id="CHEBI:57945"/>
        <dbReference type="EC" id="7.1.1.2"/>
    </reaction>
</comment>
<comment type="subunit">
    <text evidence="1 2">Core subunit of respiratory chain NADH dehydrogenase (Complex I) which is composed of 45 different subunits. Interacts with TMEM242 (By similarity).</text>
</comment>
<comment type="subcellular location">
    <subcellularLocation>
        <location evidence="2">Mitochondrion inner membrane</location>
        <topology evidence="3">Multi-pass membrane protein</topology>
    </subcellularLocation>
</comment>
<comment type="similarity">
    <text evidence="4">Belongs to the complex I subunit 2 family.</text>
</comment>
<reference key="1">
    <citation type="journal article" date="1991" name="J. Mol. Evol.">
        <title>The complete nucleotide sequence of the mitochondrial DNA of the fin whale, Balaenoptera physalus.</title>
        <authorList>
            <person name="Arnason U."/>
            <person name="Gullberg A."/>
            <person name="Widegren B."/>
        </authorList>
    </citation>
    <scope>NUCLEOTIDE SEQUENCE [GENOMIC DNA]</scope>
    <source>
        <strain>Isolate No. 27 / Anno 1987</strain>
        <tissue>Liver</tissue>
    </source>
</reference>
<feature type="chain" id="PRO_0000117557" description="NADH-ubiquinone oxidoreductase chain 2">
    <location>
        <begin position="1"/>
        <end position="347"/>
    </location>
</feature>
<feature type="transmembrane region" description="Helical" evidence="3">
    <location>
        <begin position="1"/>
        <end position="21"/>
    </location>
</feature>
<feature type="transmembrane region" description="Helical" evidence="3">
    <location>
        <begin position="25"/>
        <end position="45"/>
    </location>
</feature>
<feature type="transmembrane region" description="Helical" evidence="3">
    <location>
        <begin position="59"/>
        <end position="79"/>
    </location>
</feature>
<feature type="transmembrane region" description="Helical" evidence="3">
    <location>
        <begin position="96"/>
        <end position="116"/>
    </location>
</feature>
<feature type="transmembrane region" description="Helical" evidence="3">
    <location>
        <begin position="122"/>
        <end position="142"/>
    </location>
</feature>
<feature type="transmembrane region" description="Helical" evidence="3">
    <location>
        <begin position="149"/>
        <end position="169"/>
    </location>
</feature>
<feature type="transmembrane region" description="Helical" evidence="3">
    <location>
        <begin position="178"/>
        <end position="198"/>
    </location>
</feature>
<feature type="transmembrane region" description="Helical" evidence="3">
    <location>
        <begin position="200"/>
        <end position="220"/>
    </location>
</feature>
<feature type="transmembrane region" description="Helical" evidence="3">
    <location>
        <begin position="237"/>
        <end position="257"/>
    </location>
</feature>
<feature type="transmembrane region" description="Helical" evidence="3">
    <location>
        <begin position="274"/>
        <end position="294"/>
    </location>
</feature>
<feature type="transmembrane region" description="Helical" evidence="3">
    <location>
        <begin position="325"/>
        <end position="345"/>
    </location>
</feature>
<sequence>MNPLILIILLTTLILGTMMVVTSSHWLLAWIGFEMNMMAFIPIMMKNPTPRATEASTKYLLTQATASALLMMAVIINLMHSGQWTITKLFNPTASTLMTVALAIKLGLAPFHFWVPEVTQGIPLTTGLILLTWQKLAPLSILYQISPSINLHLMLIMSLLSILMGGWGGLNQTQLRKIMAYSSIAHMGWMTAILLYNPTLTLLNLLIYITMTFTMFMLFIQNSTTTTLSLSQTWNKMPVITTLTMLTLLSMGGLPPLSGFMPKWMIIQELTKNDMLIVPTFMAITALLNLYFYMRLTYSTALTLFPSTNNMKMKWQFNSTKRTPLLPTAIVISTMLLPLTPMLSILL</sequence>
<organism>
    <name type="scientific">Balaenoptera physalus</name>
    <name type="common">Fin whale</name>
    <name type="synonym">Balaena physalus</name>
    <dbReference type="NCBI Taxonomy" id="9770"/>
    <lineage>
        <taxon>Eukaryota</taxon>
        <taxon>Metazoa</taxon>
        <taxon>Chordata</taxon>
        <taxon>Craniata</taxon>
        <taxon>Vertebrata</taxon>
        <taxon>Euteleostomi</taxon>
        <taxon>Mammalia</taxon>
        <taxon>Eutheria</taxon>
        <taxon>Laurasiatheria</taxon>
        <taxon>Artiodactyla</taxon>
        <taxon>Whippomorpha</taxon>
        <taxon>Cetacea</taxon>
        <taxon>Mysticeti</taxon>
        <taxon>Balaenopteridae</taxon>
        <taxon>Balaenoptera</taxon>
    </lineage>
</organism>
<dbReference type="EC" id="7.1.1.2" evidence="1"/>
<dbReference type="EMBL" id="X61145">
    <property type="protein sequence ID" value="CAA43445.1"/>
    <property type="molecule type" value="Genomic_DNA"/>
</dbReference>
<dbReference type="PIR" id="B58850">
    <property type="entry name" value="B58850"/>
</dbReference>
<dbReference type="RefSeq" id="NP_006890.1">
    <property type="nucleotide sequence ID" value="NC_001321.1"/>
</dbReference>
<dbReference type="SMR" id="P24970"/>
<dbReference type="GeneID" id="807609"/>
<dbReference type="CTD" id="4536"/>
<dbReference type="GO" id="GO:0005743">
    <property type="term" value="C:mitochondrial inner membrane"/>
    <property type="evidence" value="ECO:0000250"/>
    <property type="project" value="UniProtKB"/>
</dbReference>
<dbReference type="GO" id="GO:0008137">
    <property type="term" value="F:NADH dehydrogenase (ubiquinone) activity"/>
    <property type="evidence" value="ECO:0000250"/>
    <property type="project" value="UniProtKB"/>
</dbReference>
<dbReference type="GO" id="GO:0006120">
    <property type="term" value="P:mitochondrial electron transport, NADH to ubiquinone"/>
    <property type="evidence" value="ECO:0000250"/>
    <property type="project" value="UniProtKB"/>
</dbReference>
<dbReference type="GO" id="GO:0032981">
    <property type="term" value="P:mitochondrial respiratory chain complex I assembly"/>
    <property type="evidence" value="ECO:0000250"/>
    <property type="project" value="UniProtKB"/>
</dbReference>
<dbReference type="InterPro" id="IPR050175">
    <property type="entry name" value="Complex_I_Subunit_2"/>
</dbReference>
<dbReference type="InterPro" id="IPR010933">
    <property type="entry name" value="NADH_DH_su2_C"/>
</dbReference>
<dbReference type="InterPro" id="IPR003917">
    <property type="entry name" value="NADH_UbQ_OxRdtase_chain2"/>
</dbReference>
<dbReference type="InterPro" id="IPR001750">
    <property type="entry name" value="ND/Mrp_TM"/>
</dbReference>
<dbReference type="PANTHER" id="PTHR46552">
    <property type="entry name" value="NADH-UBIQUINONE OXIDOREDUCTASE CHAIN 2"/>
    <property type="match status" value="1"/>
</dbReference>
<dbReference type="PANTHER" id="PTHR46552:SF1">
    <property type="entry name" value="NADH-UBIQUINONE OXIDOREDUCTASE CHAIN 2"/>
    <property type="match status" value="1"/>
</dbReference>
<dbReference type="Pfam" id="PF06444">
    <property type="entry name" value="NADH_dehy_S2_C"/>
    <property type="match status" value="1"/>
</dbReference>
<dbReference type="Pfam" id="PF00361">
    <property type="entry name" value="Proton_antipo_M"/>
    <property type="match status" value="1"/>
</dbReference>
<dbReference type="PRINTS" id="PR01436">
    <property type="entry name" value="NADHDHGNASE2"/>
</dbReference>
<evidence type="ECO:0000250" key="1">
    <source>
        <dbReference type="UniProtKB" id="P03891"/>
    </source>
</evidence>
<evidence type="ECO:0000250" key="2">
    <source>
        <dbReference type="UniProtKB" id="P03892"/>
    </source>
</evidence>
<evidence type="ECO:0000255" key="3"/>
<evidence type="ECO:0000305" key="4"/>